<protein>
    <recommendedName>
        <fullName evidence="1">Small ribosomal subunit protein uS17</fullName>
    </recommendedName>
    <alternativeName>
        <fullName evidence="2">30S ribosomal protein S17</fullName>
    </alternativeName>
</protein>
<comment type="function">
    <text evidence="1">One of the primary rRNA binding proteins, it binds specifically to the 5'-end of 16S ribosomal RNA.</text>
</comment>
<comment type="subunit">
    <text evidence="1">Part of the 30S ribosomal subunit.</text>
</comment>
<comment type="similarity">
    <text evidence="1">Belongs to the universal ribosomal protein uS17 family.</text>
</comment>
<accession>Q493J9</accession>
<keyword id="KW-1185">Reference proteome</keyword>
<keyword id="KW-0687">Ribonucleoprotein</keyword>
<keyword id="KW-0689">Ribosomal protein</keyword>
<keyword id="KW-0694">RNA-binding</keyword>
<keyword id="KW-0699">rRNA-binding</keyword>
<evidence type="ECO:0000255" key="1">
    <source>
        <dbReference type="HAMAP-Rule" id="MF_01345"/>
    </source>
</evidence>
<evidence type="ECO:0000305" key="2"/>
<reference key="1">
    <citation type="journal article" date="2005" name="Genome Res.">
        <title>Genome sequence of Blochmannia pennsylvanicus indicates parallel evolutionary trends among bacterial mutualists of insects.</title>
        <authorList>
            <person name="Degnan P.H."/>
            <person name="Lazarus A.B."/>
            <person name="Wernegreen J.J."/>
        </authorList>
    </citation>
    <scope>NUCLEOTIDE SEQUENCE [LARGE SCALE GENOMIC DNA]</scope>
    <source>
        <strain>BPEN</strain>
    </source>
</reference>
<feature type="chain" id="PRO_0000233434" description="Small ribosomal subunit protein uS17">
    <location>
        <begin position="1"/>
        <end position="84"/>
    </location>
</feature>
<gene>
    <name evidence="1" type="primary">rpsQ</name>
    <name type="ordered locus">BPEN_207</name>
</gene>
<dbReference type="EMBL" id="CP000016">
    <property type="protein sequence ID" value="AAZ40841.1"/>
    <property type="molecule type" value="Genomic_DNA"/>
</dbReference>
<dbReference type="RefSeq" id="WP_011282748.1">
    <property type="nucleotide sequence ID" value="NC_007292.1"/>
</dbReference>
<dbReference type="SMR" id="Q493J9"/>
<dbReference type="STRING" id="291272.BPEN_207"/>
<dbReference type="KEGG" id="bpn:BPEN_207"/>
<dbReference type="eggNOG" id="COG0186">
    <property type="taxonomic scope" value="Bacteria"/>
</dbReference>
<dbReference type="HOGENOM" id="CLU_073626_1_1_6"/>
<dbReference type="OrthoDB" id="9811714at2"/>
<dbReference type="Proteomes" id="UP000007794">
    <property type="component" value="Chromosome"/>
</dbReference>
<dbReference type="GO" id="GO:0022627">
    <property type="term" value="C:cytosolic small ribosomal subunit"/>
    <property type="evidence" value="ECO:0007669"/>
    <property type="project" value="TreeGrafter"/>
</dbReference>
<dbReference type="GO" id="GO:0019843">
    <property type="term" value="F:rRNA binding"/>
    <property type="evidence" value="ECO:0007669"/>
    <property type="project" value="UniProtKB-UniRule"/>
</dbReference>
<dbReference type="GO" id="GO:0003735">
    <property type="term" value="F:structural constituent of ribosome"/>
    <property type="evidence" value="ECO:0007669"/>
    <property type="project" value="InterPro"/>
</dbReference>
<dbReference type="GO" id="GO:0006412">
    <property type="term" value="P:translation"/>
    <property type="evidence" value="ECO:0007669"/>
    <property type="project" value="UniProtKB-UniRule"/>
</dbReference>
<dbReference type="CDD" id="cd00364">
    <property type="entry name" value="Ribosomal_uS17"/>
    <property type="match status" value="1"/>
</dbReference>
<dbReference type="Gene3D" id="2.40.50.140">
    <property type="entry name" value="Nucleic acid-binding proteins"/>
    <property type="match status" value="1"/>
</dbReference>
<dbReference type="HAMAP" id="MF_01345_B">
    <property type="entry name" value="Ribosomal_uS17_B"/>
    <property type="match status" value="1"/>
</dbReference>
<dbReference type="InterPro" id="IPR012340">
    <property type="entry name" value="NA-bd_OB-fold"/>
</dbReference>
<dbReference type="InterPro" id="IPR000266">
    <property type="entry name" value="Ribosomal_uS17"/>
</dbReference>
<dbReference type="InterPro" id="IPR019984">
    <property type="entry name" value="Ribosomal_uS17_bact/chlr"/>
</dbReference>
<dbReference type="InterPro" id="IPR019979">
    <property type="entry name" value="Ribosomal_uS17_CS"/>
</dbReference>
<dbReference type="NCBIfam" id="NF004123">
    <property type="entry name" value="PRK05610.1"/>
    <property type="match status" value="1"/>
</dbReference>
<dbReference type="NCBIfam" id="TIGR03635">
    <property type="entry name" value="uS17_bact"/>
    <property type="match status" value="1"/>
</dbReference>
<dbReference type="PANTHER" id="PTHR10744">
    <property type="entry name" value="40S RIBOSOMAL PROTEIN S11 FAMILY MEMBER"/>
    <property type="match status" value="1"/>
</dbReference>
<dbReference type="PANTHER" id="PTHR10744:SF1">
    <property type="entry name" value="SMALL RIBOSOMAL SUBUNIT PROTEIN US17M"/>
    <property type="match status" value="1"/>
</dbReference>
<dbReference type="Pfam" id="PF00366">
    <property type="entry name" value="Ribosomal_S17"/>
    <property type="match status" value="1"/>
</dbReference>
<dbReference type="PRINTS" id="PR00973">
    <property type="entry name" value="RIBOSOMALS17"/>
</dbReference>
<dbReference type="SUPFAM" id="SSF50249">
    <property type="entry name" value="Nucleic acid-binding proteins"/>
    <property type="match status" value="1"/>
</dbReference>
<dbReference type="PROSITE" id="PS00056">
    <property type="entry name" value="RIBOSOMAL_S17"/>
    <property type="match status" value="1"/>
</dbReference>
<proteinExistence type="inferred from homology"/>
<sequence length="84" mass="9795">MSDRIRILLGRVCNKKMNKSVVVSIERLIKHSTYEKFIKRTTKLHVHDPNNETNVGDLVEVQECRPISKTKSWILTSIIKKSNF</sequence>
<name>RS17_BLOPB</name>
<organism>
    <name type="scientific">Blochmanniella pennsylvanica (strain BPEN)</name>
    <dbReference type="NCBI Taxonomy" id="291272"/>
    <lineage>
        <taxon>Bacteria</taxon>
        <taxon>Pseudomonadati</taxon>
        <taxon>Pseudomonadota</taxon>
        <taxon>Gammaproteobacteria</taxon>
        <taxon>Enterobacterales</taxon>
        <taxon>Enterobacteriaceae</taxon>
        <taxon>ant endosymbionts</taxon>
        <taxon>Candidatus Blochmanniella</taxon>
    </lineage>
</organism>